<keyword id="KW-1064">Adaptive immunity</keyword>
<keyword id="KW-0053">Apoptosis</keyword>
<keyword id="KW-0067">ATP-binding</keyword>
<keyword id="KW-0106">Calcium</keyword>
<keyword id="KW-0156">Chromatin regulator</keyword>
<keyword id="KW-0963">Cytoplasm</keyword>
<keyword id="KW-0391">Immunity</keyword>
<keyword id="KW-0418">Kinase</keyword>
<keyword id="KW-0472">Membrane</keyword>
<keyword id="KW-0479">Metal-binding</keyword>
<keyword id="KW-0547">Nucleotide-binding</keyword>
<keyword id="KW-0539">Nucleus</keyword>
<keyword id="KW-0597">Phosphoprotein</keyword>
<keyword id="KW-1185">Reference proteome</keyword>
<keyword id="KW-0677">Repeat</keyword>
<keyword id="KW-0723">Serine/threonine-protein kinase</keyword>
<keyword id="KW-0804">Transcription</keyword>
<keyword id="KW-0805">Transcription regulation</keyword>
<keyword id="KW-0808">Transferase</keyword>
<keyword id="KW-0862">Zinc</keyword>
<keyword id="KW-0863">Zinc-finger</keyword>
<organism>
    <name type="scientific">Xenopus laevis</name>
    <name type="common">African clawed frog</name>
    <dbReference type="NCBI Taxonomy" id="8355"/>
    <lineage>
        <taxon>Eukaryota</taxon>
        <taxon>Metazoa</taxon>
        <taxon>Chordata</taxon>
        <taxon>Craniata</taxon>
        <taxon>Vertebrata</taxon>
        <taxon>Euteleostomi</taxon>
        <taxon>Amphibia</taxon>
        <taxon>Batrachia</taxon>
        <taxon>Anura</taxon>
        <taxon>Pipoidea</taxon>
        <taxon>Pipidae</taxon>
        <taxon>Xenopodinae</taxon>
        <taxon>Xenopus</taxon>
        <taxon>Xenopus</taxon>
    </lineage>
</organism>
<proteinExistence type="evidence at transcript level"/>
<feature type="initiator methionine" description="Removed" evidence="1">
    <location>
        <position position="1"/>
    </location>
</feature>
<feature type="chain" id="PRO_0000394259" description="Protein kinase C beta type">
    <location>
        <begin position="2"/>
        <end position="671"/>
    </location>
</feature>
<feature type="domain" description="C2" evidence="4">
    <location>
        <begin position="155"/>
        <end position="272"/>
    </location>
</feature>
<feature type="domain" description="Protein kinase" evidence="5">
    <location>
        <begin position="339"/>
        <end position="597"/>
    </location>
</feature>
<feature type="domain" description="AGC-kinase C-terminal" evidence="7">
    <location>
        <begin position="598"/>
        <end position="668"/>
    </location>
</feature>
<feature type="zinc finger region" description="Phorbol-ester/DAG-type 1" evidence="6">
    <location>
        <begin position="33"/>
        <end position="83"/>
    </location>
</feature>
<feature type="zinc finger region" description="Phorbol-ester/DAG-type 2" evidence="6">
    <location>
        <begin position="98"/>
        <end position="148"/>
    </location>
</feature>
<feature type="region of interest" description="Disordered" evidence="9">
    <location>
        <begin position="308"/>
        <end position="332"/>
    </location>
</feature>
<feature type="active site" description="Proton acceptor" evidence="5 8">
    <location>
        <position position="463"/>
    </location>
</feature>
<feature type="binding site" evidence="3">
    <location>
        <position position="183"/>
    </location>
    <ligand>
        <name>Ca(2+)</name>
        <dbReference type="ChEBI" id="CHEBI:29108"/>
        <label>1</label>
    </ligand>
</feature>
<feature type="binding site" evidence="3">
    <location>
        <position position="184"/>
    </location>
    <ligand>
        <name>Ca(2+)</name>
        <dbReference type="ChEBI" id="CHEBI:29108"/>
        <label>1</label>
    </ligand>
</feature>
<feature type="binding site" evidence="3">
    <location>
        <position position="184"/>
    </location>
    <ligand>
        <name>Ca(2+)</name>
        <dbReference type="ChEBI" id="CHEBI:29108"/>
        <label>2</label>
    </ligand>
</feature>
<feature type="binding site" evidence="3">
    <location>
        <position position="190"/>
    </location>
    <ligand>
        <name>Ca(2+)</name>
        <dbReference type="ChEBI" id="CHEBI:29108"/>
        <label>2</label>
    </ligand>
</feature>
<feature type="binding site" evidence="3">
    <location>
        <position position="243"/>
    </location>
    <ligand>
        <name>Ca(2+)</name>
        <dbReference type="ChEBI" id="CHEBI:29108"/>
        <label>1</label>
    </ligand>
</feature>
<feature type="binding site" evidence="3">
    <location>
        <position position="243"/>
    </location>
    <ligand>
        <name>Ca(2+)</name>
        <dbReference type="ChEBI" id="CHEBI:29108"/>
        <label>2</label>
    </ligand>
</feature>
<feature type="binding site" evidence="3">
    <location>
        <position position="244"/>
    </location>
    <ligand>
        <name>Ca(2+)</name>
        <dbReference type="ChEBI" id="CHEBI:29108"/>
        <label>2</label>
    </ligand>
</feature>
<feature type="binding site" evidence="3">
    <location>
        <position position="248"/>
    </location>
    <ligand>
        <name>Ca(2+)</name>
        <dbReference type="ChEBI" id="CHEBI:29108"/>
        <label>3</label>
    </ligand>
</feature>
<feature type="binding site" evidence="3">
    <location>
        <position position="249"/>
    </location>
    <ligand>
        <name>Ca(2+)</name>
        <dbReference type="ChEBI" id="CHEBI:29108"/>
        <label>3</label>
    </ligand>
</feature>
<feature type="binding site" evidence="3">
    <location>
        <position position="251"/>
    </location>
    <ligand>
        <name>Ca(2+)</name>
        <dbReference type="ChEBI" id="CHEBI:29108"/>
        <label>1</label>
    </ligand>
</feature>
<feature type="binding site" evidence="3">
    <location>
        <position position="251"/>
    </location>
    <ligand>
        <name>Ca(2+)</name>
        <dbReference type="ChEBI" id="CHEBI:29108"/>
        <label>3</label>
    </ligand>
</feature>
<feature type="binding site" evidence="5">
    <location>
        <begin position="345"/>
        <end position="353"/>
    </location>
    <ligand>
        <name>ATP</name>
        <dbReference type="ChEBI" id="CHEBI:30616"/>
    </ligand>
</feature>
<feature type="binding site" evidence="5">
    <location>
        <position position="368"/>
    </location>
    <ligand>
        <name>ATP</name>
        <dbReference type="ChEBI" id="CHEBI:30616"/>
    </ligand>
</feature>
<feature type="modified residue" description="Phosphothreonine" evidence="1">
    <location>
        <position position="497"/>
    </location>
</feature>
<feature type="modified residue" description="Phosphothreonine" evidence="1">
    <location>
        <position position="501"/>
    </location>
</feature>
<feature type="modified residue" description="Phosphothreonine; by autocatalysis" evidence="3">
    <location>
        <position position="631"/>
    </location>
</feature>
<feature type="modified residue" description="Phosphothreonine; by autocatalysis" evidence="1">
    <location>
        <position position="638"/>
    </location>
</feature>
<feature type="modified residue" description="Phosphoserine; by autocatalysis" evidence="1">
    <location>
        <position position="657"/>
    </location>
</feature>
<name>KPCB_XENLA</name>
<evidence type="ECO:0000250" key="1"/>
<evidence type="ECO:0000250" key="2">
    <source>
        <dbReference type="UniProtKB" id="P05771"/>
    </source>
</evidence>
<evidence type="ECO:0000250" key="3">
    <source>
        <dbReference type="UniProtKB" id="P68403"/>
    </source>
</evidence>
<evidence type="ECO:0000255" key="4">
    <source>
        <dbReference type="PROSITE-ProRule" id="PRU00041"/>
    </source>
</evidence>
<evidence type="ECO:0000255" key="5">
    <source>
        <dbReference type="PROSITE-ProRule" id="PRU00159"/>
    </source>
</evidence>
<evidence type="ECO:0000255" key="6">
    <source>
        <dbReference type="PROSITE-ProRule" id="PRU00226"/>
    </source>
</evidence>
<evidence type="ECO:0000255" key="7">
    <source>
        <dbReference type="PROSITE-ProRule" id="PRU00618"/>
    </source>
</evidence>
<evidence type="ECO:0000255" key="8">
    <source>
        <dbReference type="PROSITE-ProRule" id="PRU10027"/>
    </source>
</evidence>
<evidence type="ECO:0000256" key="9">
    <source>
        <dbReference type="SAM" id="MobiDB-lite"/>
    </source>
</evidence>
<evidence type="ECO:0000305" key="10"/>
<dbReference type="EC" id="2.7.11.13" evidence="2"/>
<dbReference type="PIR" id="B37237">
    <property type="entry name" value="B37237"/>
</dbReference>
<dbReference type="SMR" id="Q7LZQ8"/>
<dbReference type="Proteomes" id="UP000186698">
    <property type="component" value="Unplaced"/>
</dbReference>
<dbReference type="GO" id="GO:0005737">
    <property type="term" value="C:cytoplasm"/>
    <property type="evidence" value="ECO:0007669"/>
    <property type="project" value="UniProtKB-SubCell"/>
</dbReference>
<dbReference type="GO" id="GO:0016020">
    <property type="term" value="C:membrane"/>
    <property type="evidence" value="ECO:0007669"/>
    <property type="project" value="UniProtKB-SubCell"/>
</dbReference>
<dbReference type="GO" id="GO:0005634">
    <property type="term" value="C:nucleus"/>
    <property type="evidence" value="ECO:0000250"/>
    <property type="project" value="UniProtKB"/>
</dbReference>
<dbReference type="GO" id="GO:0005524">
    <property type="term" value="F:ATP binding"/>
    <property type="evidence" value="ECO:0007669"/>
    <property type="project" value="UniProtKB-KW"/>
</dbReference>
<dbReference type="GO" id="GO:0004698">
    <property type="term" value="F:calcium,diacylglycerol-dependent serine/threonine kinase activity"/>
    <property type="evidence" value="ECO:0000250"/>
    <property type="project" value="UniProtKB"/>
</dbReference>
<dbReference type="GO" id="GO:0003682">
    <property type="term" value="F:chromatin binding"/>
    <property type="evidence" value="ECO:0000250"/>
    <property type="project" value="UniProtKB"/>
</dbReference>
<dbReference type="GO" id="GO:0042393">
    <property type="term" value="F:histone binding"/>
    <property type="evidence" value="ECO:0000250"/>
    <property type="project" value="UniProtKB"/>
</dbReference>
<dbReference type="GO" id="GO:0035403">
    <property type="term" value="F:histone H3T6 kinase activity"/>
    <property type="evidence" value="ECO:0000250"/>
    <property type="project" value="UniProtKB"/>
</dbReference>
<dbReference type="GO" id="GO:0050681">
    <property type="term" value="F:nuclear androgen receptor binding"/>
    <property type="evidence" value="ECO:0000250"/>
    <property type="project" value="UniProtKB"/>
</dbReference>
<dbReference type="GO" id="GO:0106310">
    <property type="term" value="F:protein serine kinase activity"/>
    <property type="evidence" value="ECO:0007669"/>
    <property type="project" value="RHEA"/>
</dbReference>
<dbReference type="GO" id="GO:0004674">
    <property type="term" value="F:protein serine/threonine kinase activity"/>
    <property type="evidence" value="ECO:0000318"/>
    <property type="project" value="GO_Central"/>
</dbReference>
<dbReference type="GO" id="GO:0003713">
    <property type="term" value="F:transcription coactivator activity"/>
    <property type="evidence" value="ECO:0000250"/>
    <property type="project" value="UniProtKB"/>
</dbReference>
<dbReference type="GO" id="GO:0008270">
    <property type="term" value="F:zinc ion binding"/>
    <property type="evidence" value="ECO:0007669"/>
    <property type="project" value="UniProtKB-KW"/>
</dbReference>
<dbReference type="GO" id="GO:0002250">
    <property type="term" value="P:adaptive immune response"/>
    <property type="evidence" value="ECO:0007669"/>
    <property type="project" value="UniProtKB-KW"/>
</dbReference>
<dbReference type="GO" id="GO:0006915">
    <property type="term" value="P:apoptotic process"/>
    <property type="evidence" value="ECO:0007669"/>
    <property type="project" value="UniProtKB-KW"/>
</dbReference>
<dbReference type="GO" id="GO:0042113">
    <property type="term" value="P:B cell activation"/>
    <property type="evidence" value="ECO:0000250"/>
    <property type="project" value="UniProtKB"/>
</dbReference>
<dbReference type="GO" id="GO:0050853">
    <property type="term" value="P:B cell receptor signaling pathway"/>
    <property type="evidence" value="ECO:0000250"/>
    <property type="project" value="UniProtKB"/>
</dbReference>
<dbReference type="GO" id="GO:0035556">
    <property type="term" value="P:intracellular signal transduction"/>
    <property type="evidence" value="ECO:0000318"/>
    <property type="project" value="GO_Central"/>
</dbReference>
<dbReference type="GO" id="GO:0043123">
    <property type="term" value="P:positive regulation of canonical NF-kappaB signal transduction"/>
    <property type="evidence" value="ECO:0000250"/>
    <property type="project" value="UniProtKB"/>
</dbReference>
<dbReference type="GO" id="GO:0070528">
    <property type="term" value="P:protein kinase C signaling"/>
    <property type="evidence" value="ECO:0000250"/>
    <property type="project" value="UniProtKB"/>
</dbReference>
<dbReference type="GO" id="GO:0006357">
    <property type="term" value="P:regulation of transcription by RNA polymerase II"/>
    <property type="evidence" value="ECO:0000250"/>
    <property type="project" value="UniProtKB"/>
</dbReference>
<dbReference type="CDD" id="cd20833">
    <property type="entry name" value="C1_cPKC_rpt1"/>
    <property type="match status" value="1"/>
</dbReference>
<dbReference type="CDD" id="cd20836">
    <property type="entry name" value="C1_cPKC_rpt2"/>
    <property type="match status" value="1"/>
</dbReference>
<dbReference type="CDD" id="cd04026">
    <property type="entry name" value="C2_PKC_alpha_gamma"/>
    <property type="match status" value="1"/>
</dbReference>
<dbReference type="CDD" id="cd05616">
    <property type="entry name" value="STKc_cPKC_beta"/>
    <property type="match status" value="1"/>
</dbReference>
<dbReference type="FunFam" id="2.60.40.150:FF:000012">
    <property type="entry name" value="Kinase C alpha type"/>
    <property type="match status" value="1"/>
</dbReference>
<dbReference type="FunFam" id="1.10.510.10:FF:000023">
    <property type="entry name" value="Protein kinase C"/>
    <property type="match status" value="1"/>
</dbReference>
<dbReference type="FunFam" id="3.30.200.20:FF:000080">
    <property type="entry name" value="Protein kinase C"/>
    <property type="match status" value="1"/>
</dbReference>
<dbReference type="FunFam" id="3.30.200.20:FF:000103">
    <property type="entry name" value="Protein kinase C"/>
    <property type="match status" value="1"/>
</dbReference>
<dbReference type="FunFam" id="3.30.60.20:FF:000006">
    <property type="entry name" value="Protein kinase C"/>
    <property type="match status" value="1"/>
</dbReference>
<dbReference type="FunFam" id="3.30.60.20:FF:000031">
    <property type="entry name" value="Protein kinase C alpha"/>
    <property type="match status" value="1"/>
</dbReference>
<dbReference type="Gene3D" id="3.30.60.20">
    <property type="match status" value="2"/>
</dbReference>
<dbReference type="Gene3D" id="2.60.40.150">
    <property type="entry name" value="C2 domain"/>
    <property type="match status" value="1"/>
</dbReference>
<dbReference type="Gene3D" id="3.30.200.20">
    <property type="entry name" value="Phosphorylase Kinase, domain 1"/>
    <property type="match status" value="2"/>
</dbReference>
<dbReference type="Gene3D" id="1.10.510.10">
    <property type="entry name" value="Transferase(Phosphotransferase) domain 1"/>
    <property type="match status" value="1"/>
</dbReference>
<dbReference type="InterPro" id="IPR000961">
    <property type="entry name" value="AGC-kinase_C"/>
</dbReference>
<dbReference type="InterPro" id="IPR046349">
    <property type="entry name" value="C1-like_sf"/>
</dbReference>
<dbReference type="InterPro" id="IPR000008">
    <property type="entry name" value="C2_dom"/>
</dbReference>
<dbReference type="InterPro" id="IPR035892">
    <property type="entry name" value="C2_domain_sf"/>
</dbReference>
<dbReference type="InterPro" id="IPR034664">
    <property type="entry name" value="cPKC-beta"/>
</dbReference>
<dbReference type="InterPro" id="IPR020454">
    <property type="entry name" value="DAG/PE-bd"/>
</dbReference>
<dbReference type="InterPro" id="IPR011009">
    <property type="entry name" value="Kinase-like_dom_sf"/>
</dbReference>
<dbReference type="InterPro" id="IPR002219">
    <property type="entry name" value="PE/DAG-bd"/>
</dbReference>
<dbReference type="InterPro" id="IPR017892">
    <property type="entry name" value="Pkinase_C"/>
</dbReference>
<dbReference type="InterPro" id="IPR000719">
    <property type="entry name" value="Prot_kinase_dom"/>
</dbReference>
<dbReference type="InterPro" id="IPR017441">
    <property type="entry name" value="Protein_kinase_ATP_BS"/>
</dbReference>
<dbReference type="InterPro" id="IPR014375">
    <property type="entry name" value="Protein_kinase_C_a/b/g"/>
</dbReference>
<dbReference type="InterPro" id="IPR008271">
    <property type="entry name" value="Ser/Thr_kinase_AS"/>
</dbReference>
<dbReference type="PANTHER" id="PTHR24351">
    <property type="entry name" value="RIBOSOMAL PROTEIN S6 KINASE"/>
    <property type="match status" value="1"/>
</dbReference>
<dbReference type="Pfam" id="PF00130">
    <property type="entry name" value="C1_1"/>
    <property type="match status" value="2"/>
</dbReference>
<dbReference type="Pfam" id="PF00168">
    <property type="entry name" value="C2"/>
    <property type="match status" value="1"/>
</dbReference>
<dbReference type="Pfam" id="PF00069">
    <property type="entry name" value="Pkinase"/>
    <property type="match status" value="1"/>
</dbReference>
<dbReference type="Pfam" id="PF00433">
    <property type="entry name" value="Pkinase_C"/>
    <property type="match status" value="1"/>
</dbReference>
<dbReference type="PIRSF" id="PIRSF000550">
    <property type="entry name" value="PKC_alpha"/>
    <property type="match status" value="1"/>
</dbReference>
<dbReference type="PRINTS" id="PR00360">
    <property type="entry name" value="C2DOMAIN"/>
</dbReference>
<dbReference type="PRINTS" id="PR00008">
    <property type="entry name" value="DAGPEDOMAIN"/>
</dbReference>
<dbReference type="SMART" id="SM00109">
    <property type="entry name" value="C1"/>
    <property type="match status" value="2"/>
</dbReference>
<dbReference type="SMART" id="SM00239">
    <property type="entry name" value="C2"/>
    <property type="match status" value="1"/>
</dbReference>
<dbReference type="SMART" id="SM00133">
    <property type="entry name" value="S_TK_X"/>
    <property type="match status" value="1"/>
</dbReference>
<dbReference type="SMART" id="SM00220">
    <property type="entry name" value="S_TKc"/>
    <property type="match status" value="1"/>
</dbReference>
<dbReference type="SUPFAM" id="SSF49562">
    <property type="entry name" value="C2 domain (Calcium/lipid-binding domain, CaLB)"/>
    <property type="match status" value="1"/>
</dbReference>
<dbReference type="SUPFAM" id="SSF57889">
    <property type="entry name" value="Cysteine-rich domain"/>
    <property type="match status" value="2"/>
</dbReference>
<dbReference type="SUPFAM" id="SSF56112">
    <property type="entry name" value="Protein kinase-like (PK-like)"/>
    <property type="match status" value="1"/>
</dbReference>
<dbReference type="PROSITE" id="PS51285">
    <property type="entry name" value="AGC_KINASE_CTER"/>
    <property type="match status" value="1"/>
</dbReference>
<dbReference type="PROSITE" id="PS50004">
    <property type="entry name" value="C2"/>
    <property type="match status" value="1"/>
</dbReference>
<dbReference type="PROSITE" id="PS00107">
    <property type="entry name" value="PROTEIN_KINASE_ATP"/>
    <property type="match status" value="1"/>
</dbReference>
<dbReference type="PROSITE" id="PS50011">
    <property type="entry name" value="PROTEIN_KINASE_DOM"/>
    <property type="match status" value="1"/>
</dbReference>
<dbReference type="PROSITE" id="PS00108">
    <property type="entry name" value="PROTEIN_KINASE_ST"/>
    <property type="match status" value="1"/>
</dbReference>
<dbReference type="PROSITE" id="PS00479">
    <property type="entry name" value="ZF_DAG_PE_1"/>
    <property type="match status" value="2"/>
</dbReference>
<dbReference type="PROSITE" id="PS50081">
    <property type="entry name" value="ZF_DAG_PE_2"/>
    <property type="match status" value="2"/>
</dbReference>
<gene>
    <name type="primary">prkcb</name>
    <name type="synonym">prkcb1</name>
</gene>
<protein>
    <recommendedName>
        <fullName>Protein kinase C beta type</fullName>
        <shortName>PKC-B</shortName>
        <shortName>PKC-beta</shortName>
        <ecNumber evidence="2">2.7.11.13</ecNumber>
    </recommendedName>
</protein>
<accession>Q7LZQ8</accession>
<comment type="function">
    <text evidence="1">Calcium-activated and phospholipid-dependent serine/threonine-protein kinase involved in various processes such as regulation of the B-cell receptor (BCR) signalosome, apoptosis and transcription regulation. Plays a key role in B-cell activation and function by regulating BCR-induced NF-kappa-B activation and B-cell survival. Required for recruitment and activation of the IKK kinase to lipid rafts and mediates phosphorylation of card11/carma1, leading to activate the NF-kappa-B signaling. Involved in apoptosis following oxidative damage: in case of oxidative conditions, specifically phosphorylates isoform p66Shc of shc1, leading to mitochondrial accumulation of p66Shc, where p66Shc acts as a reactive oxygen species producer. Acts as a coactivator of androgen receptor (andr)-dependent transcription, by being recruited to ANDR target genes and specifically mediating phosphorylation of 'Thr-6' of histone H3 (H3T6ph), a specific tag for epigenetic transcriptional activation (By similarity).</text>
</comment>
<comment type="catalytic activity">
    <reaction evidence="2">
        <text>L-seryl-[protein] + ATP = O-phospho-L-seryl-[protein] + ADP + H(+)</text>
        <dbReference type="Rhea" id="RHEA:17989"/>
        <dbReference type="Rhea" id="RHEA-COMP:9863"/>
        <dbReference type="Rhea" id="RHEA-COMP:11604"/>
        <dbReference type="ChEBI" id="CHEBI:15378"/>
        <dbReference type="ChEBI" id="CHEBI:29999"/>
        <dbReference type="ChEBI" id="CHEBI:30616"/>
        <dbReference type="ChEBI" id="CHEBI:83421"/>
        <dbReference type="ChEBI" id="CHEBI:456216"/>
        <dbReference type="EC" id="2.7.11.13"/>
    </reaction>
</comment>
<comment type="catalytic activity">
    <reaction evidence="2">
        <text>L-threonyl-[protein] + ATP = O-phospho-L-threonyl-[protein] + ADP + H(+)</text>
        <dbReference type="Rhea" id="RHEA:46608"/>
        <dbReference type="Rhea" id="RHEA-COMP:11060"/>
        <dbReference type="Rhea" id="RHEA-COMP:11605"/>
        <dbReference type="ChEBI" id="CHEBI:15378"/>
        <dbReference type="ChEBI" id="CHEBI:30013"/>
        <dbReference type="ChEBI" id="CHEBI:30616"/>
        <dbReference type="ChEBI" id="CHEBI:61977"/>
        <dbReference type="ChEBI" id="CHEBI:456216"/>
        <dbReference type="EC" id="2.7.11.13"/>
    </reaction>
</comment>
<comment type="cofactor">
    <cofactor evidence="3">
        <name>Ca(2+)</name>
        <dbReference type="ChEBI" id="CHEBI:29108"/>
    </cofactor>
    <text evidence="3">Binds 3 Ca(2+) ions per subunit. The ions are bound to the C2 domain.</text>
</comment>
<comment type="activity regulation">
    <text evidence="1">Activated by diacylglycerol which in turn phosphorylates a range of cellular proteins.</text>
</comment>
<comment type="subcellular location">
    <subcellularLocation>
        <location evidence="1">Cytoplasm</location>
    </subcellularLocation>
    <subcellularLocation>
        <location evidence="1">Nucleus</location>
    </subcellularLocation>
    <subcellularLocation>
        <location evidence="1">Membrane</location>
        <topology evidence="1">Peripheral membrane protein</topology>
    </subcellularLocation>
</comment>
<comment type="PTM">
    <text evidence="1">Phosphorylation on Thr-497 within the activation loop renders it competent to autophosphorylate. Subsequent autophosphorylation of Thr-638 maintains catalytic competence, and autophosphorylation on Ser-657 appears to release the kinase into the cytosol (By similarity).</text>
</comment>
<comment type="similarity">
    <text evidence="10">Belongs to the protein kinase superfamily. AGC Ser/Thr protein kinase family. PKC subfamily.</text>
</comment>
<sequence>MSDSEACEPGDDTTTRFARKGALRQKNVHEVKEHKFTARFFKQPTFCSHCTDFIWGFGKQGFQCQVCCFVVHKRCHEFVTFSCPGADKGPASDDPRSKHKFRIHTYSSPTFCDHCGSLLYGLIHQGMKCETCMMNVHKRCVMNVPSLCGTDHTERRGRIHIKAEIKEEVMTVTVGDAKNLVPMDPNGLSDPYVKLKLIPDPKSETKQKTKTIKCSLNPSWNETFKFQLKESDKDRRLSVEIWDWELTSRNDFMGSLSFGISELLKAGVDGWFKLLSQEEGEYFNVPVPPEGEEGNEELRQKFERAKIGPGNKAAGREGGKPSVQGGQQGNRDHMKVSDFNFLKVLGKGSFGKVTLAERKGTDELYAIKILKKDVVIQDDDVECTMVEKRVLALSGKPPFLTHLHSCFQTMDRLYFVMEFVNGGDLMYQIQQVGRFKEPHAVFYAAEIRVGLLFLHSKGIVYRDLKLDNVMLDSEGHIKIADFGMCKENMWDGITTKTFCGTPDYIAPGIIRYQPYAKSVDWWAFGILLYEMLAGHVPFEGEDEDELFQSIMEHNVAYPKSMSKEAVAICKGLMTKHPGKRLGCGPEGERDIKDHAFFRYIDWEKLERNEIQPPYKPKACGRNAENFDKFFTRHPPVLTPPDHEVIRNIDQSEFEGFSYVNSDFSKEEEKKD</sequence>
<reference key="1">
    <citation type="journal article" date="1988" name="Second Messengers Phosphoproteins">
        <title>Molecular cloning and sequence analysis of two distinct types of Xenopus laevis protein kinase C.</title>
        <authorList>
            <person name="Chen K.H."/>
            <person name="Peng Z.G."/>
            <person name="Lavu S."/>
            <person name="Kung H.F."/>
        </authorList>
    </citation>
    <scope>NUCLEOTIDE SEQUENCE [MRNA]</scope>
    <source>
        <tissue>Oocyte</tissue>
    </source>
</reference>